<evidence type="ECO:0000255" key="1">
    <source>
        <dbReference type="HAMAP-Rule" id="MF_00004"/>
    </source>
</evidence>
<proteinExistence type="inferred from homology"/>
<accession>C4L531</accession>
<protein>
    <recommendedName>
        <fullName evidence="1">Adenine phosphoribosyltransferase</fullName>
        <shortName evidence="1">APRT</shortName>
        <ecNumber evidence="1">2.4.2.7</ecNumber>
    </recommendedName>
</protein>
<keyword id="KW-0963">Cytoplasm</keyword>
<keyword id="KW-0328">Glycosyltransferase</keyword>
<keyword id="KW-0660">Purine salvage</keyword>
<keyword id="KW-0808">Transferase</keyword>
<dbReference type="EC" id="2.4.2.7" evidence="1"/>
<dbReference type="EMBL" id="CP001615">
    <property type="protein sequence ID" value="ACQ71616.1"/>
    <property type="molecule type" value="Genomic_DNA"/>
</dbReference>
<dbReference type="RefSeq" id="WP_015881175.1">
    <property type="nucleotide sequence ID" value="NC_012673.1"/>
</dbReference>
<dbReference type="SMR" id="C4L531"/>
<dbReference type="STRING" id="360911.EAT1b_2701"/>
<dbReference type="KEGG" id="eat:EAT1b_2701"/>
<dbReference type="eggNOG" id="COG0503">
    <property type="taxonomic scope" value="Bacteria"/>
</dbReference>
<dbReference type="HOGENOM" id="CLU_063339_3_0_9"/>
<dbReference type="OrthoDB" id="9803963at2"/>
<dbReference type="UniPathway" id="UPA00588">
    <property type="reaction ID" value="UER00646"/>
</dbReference>
<dbReference type="Proteomes" id="UP000000716">
    <property type="component" value="Chromosome"/>
</dbReference>
<dbReference type="GO" id="GO:0005737">
    <property type="term" value="C:cytoplasm"/>
    <property type="evidence" value="ECO:0007669"/>
    <property type="project" value="UniProtKB-SubCell"/>
</dbReference>
<dbReference type="GO" id="GO:0002055">
    <property type="term" value="F:adenine binding"/>
    <property type="evidence" value="ECO:0007669"/>
    <property type="project" value="TreeGrafter"/>
</dbReference>
<dbReference type="GO" id="GO:0003999">
    <property type="term" value="F:adenine phosphoribosyltransferase activity"/>
    <property type="evidence" value="ECO:0007669"/>
    <property type="project" value="UniProtKB-UniRule"/>
</dbReference>
<dbReference type="GO" id="GO:0016208">
    <property type="term" value="F:AMP binding"/>
    <property type="evidence" value="ECO:0007669"/>
    <property type="project" value="TreeGrafter"/>
</dbReference>
<dbReference type="GO" id="GO:0006168">
    <property type="term" value="P:adenine salvage"/>
    <property type="evidence" value="ECO:0007669"/>
    <property type="project" value="InterPro"/>
</dbReference>
<dbReference type="GO" id="GO:0044209">
    <property type="term" value="P:AMP salvage"/>
    <property type="evidence" value="ECO:0007669"/>
    <property type="project" value="UniProtKB-UniRule"/>
</dbReference>
<dbReference type="GO" id="GO:0006166">
    <property type="term" value="P:purine ribonucleoside salvage"/>
    <property type="evidence" value="ECO:0007669"/>
    <property type="project" value="UniProtKB-KW"/>
</dbReference>
<dbReference type="CDD" id="cd06223">
    <property type="entry name" value="PRTases_typeI"/>
    <property type="match status" value="1"/>
</dbReference>
<dbReference type="FunFam" id="3.40.50.2020:FF:000004">
    <property type="entry name" value="Adenine phosphoribosyltransferase"/>
    <property type="match status" value="1"/>
</dbReference>
<dbReference type="Gene3D" id="3.40.50.2020">
    <property type="match status" value="1"/>
</dbReference>
<dbReference type="HAMAP" id="MF_00004">
    <property type="entry name" value="Aden_phosphoribosyltr"/>
    <property type="match status" value="1"/>
</dbReference>
<dbReference type="InterPro" id="IPR005764">
    <property type="entry name" value="Ade_phspho_trans"/>
</dbReference>
<dbReference type="InterPro" id="IPR000836">
    <property type="entry name" value="PRibTrfase_dom"/>
</dbReference>
<dbReference type="InterPro" id="IPR029057">
    <property type="entry name" value="PRTase-like"/>
</dbReference>
<dbReference type="InterPro" id="IPR050054">
    <property type="entry name" value="UPRTase/APRTase"/>
</dbReference>
<dbReference type="NCBIfam" id="TIGR01090">
    <property type="entry name" value="apt"/>
    <property type="match status" value="1"/>
</dbReference>
<dbReference type="NCBIfam" id="NF002633">
    <property type="entry name" value="PRK02304.1-2"/>
    <property type="match status" value="1"/>
</dbReference>
<dbReference type="NCBIfam" id="NF002634">
    <property type="entry name" value="PRK02304.1-3"/>
    <property type="match status" value="1"/>
</dbReference>
<dbReference type="NCBIfam" id="NF002636">
    <property type="entry name" value="PRK02304.1-5"/>
    <property type="match status" value="1"/>
</dbReference>
<dbReference type="PANTHER" id="PTHR32315">
    <property type="entry name" value="ADENINE PHOSPHORIBOSYLTRANSFERASE"/>
    <property type="match status" value="1"/>
</dbReference>
<dbReference type="PANTHER" id="PTHR32315:SF3">
    <property type="entry name" value="ADENINE PHOSPHORIBOSYLTRANSFERASE"/>
    <property type="match status" value="1"/>
</dbReference>
<dbReference type="Pfam" id="PF00156">
    <property type="entry name" value="Pribosyltran"/>
    <property type="match status" value="1"/>
</dbReference>
<dbReference type="SUPFAM" id="SSF53271">
    <property type="entry name" value="PRTase-like"/>
    <property type="match status" value="1"/>
</dbReference>
<dbReference type="PROSITE" id="PS00103">
    <property type="entry name" value="PUR_PYR_PR_TRANSFER"/>
    <property type="match status" value="1"/>
</dbReference>
<organism>
    <name type="scientific">Exiguobacterium sp. (strain ATCC BAA-1283 / AT1b)</name>
    <dbReference type="NCBI Taxonomy" id="360911"/>
    <lineage>
        <taxon>Bacteria</taxon>
        <taxon>Bacillati</taxon>
        <taxon>Bacillota</taxon>
        <taxon>Bacilli</taxon>
        <taxon>Bacillales</taxon>
        <taxon>Bacillales Family XII. Incertae Sedis</taxon>
        <taxon>Exiguobacterium</taxon>
    </lineage>
</organism>
<comment type="function">
    <text evidence="1">Catalyzes a salvage reaction resulting in the formation of AMP, that is energically less costly than de novo synthesis.</text>
</comment>
<comment type="catalytic activity">
    <reaction evidence="1">
        <text>AMP + diphosphate = 5-phospho-alpha-D-ribose 1-diphosphate + adenine</text>
        <dbReference type="Rhea" id="RHEA:16609"/>
        <dbReference type="ChEBI" id="CHEBI:16708"/>
        <dbReference type="ChEBI" id="CHEBI:33019"/>
        <dbReference type="ChEBI" id="CHEBI:58017"/>
        <dbReference type="ChEBI" id="CHEBI:456215"/>
        <dbReference type="EC" id="2.4.2.7"/>
    </reaction>
</comment>
<comment type="pathway">
    <text evidence="1">Purine metabolism; AMP biosynthesis via salvage pathway; AMP from adenine: step 1/1.</text>
</comment>
<comment type="subunit">
    <text evidence="1">Homodimer.</text>
</comment>
<comment type="subcellular location">
    <subcellularLocation>
        <location evidence="1">Cytoplasm</location>
    </subcellularLocation>
</comment>
<comment type="similarity">
    <text evidence="1">Belongs to the purine/pyrimidine phosphoribosyltransferase family.</text>
</comment>
<name>APT_EXISA</name>
<gene>
    <name evidence="1" type="primary">apt</name>
    <name type="ordered locus">EAT1b_2701</name>
</gene>
<feature type="chain" id="PRO_1000201664" description="Adenine phosphoribosyltransferase">
    <location>
        <begin position="1"/>
        <end position="172"/>
    </location>
</feature>
<sequence length="172" mass="18886">MDFKQHIKEVADYPKEGISFKDITSLMQNGEVYKKSVDELVAYARERGAELIAGPEARGFVVGCPAAYALELGFVPVRKEGKLPRETVRVSYGLEYGTDILTMHKDSIQPGQQVVILDDLLATGGTIEATIKMIEQLGGVVAGIGFLIELDGLGGRERLEGYDVFSLIRYED</sequence>
<reference key="1">
    <citation type="journal article" date="2011" name="J. Bacteriol.">
        <title>Complete genome sequence of the Thermophilic Bacterium Exiguobacterium sp. AT1b.</title>
        <authorList>
            <person name="Vishnivetskaya T.A."/>
            <person name="Lucas S."/>
            <person name="Copeland A."/>
            <person name="Lapidus A."/>
            <person name="Glavina del Rio T."/>
            <person name="Dalin E."/>
            <person name="Tice H."/>
            <person name="Bruce D.C."/>
            <person name="Goodwin L.A."/>
            <person name="Pitluck S."/>
            <person name="Saunders E."/>
            <person name="Brettin T."/>
            <person name="Detter C."/>
            <person name="Han C."/>
            <person name="Larimer F."/>
            <person name="Land M.L."/>
            <person name="Hauser L.J."/>
            <person name="Kyrpides N.C."/>
            <person name="Ovchinnikova G."/>
            <person name="Kathariou S."/>
            <person name="Ramaley R.F."/>
            <person name="Rodrigues D.F."/>
            <person name="Hendrix C."/>
            <person name="Richardson P."/>
            <person name="Tiedje J.M."/>
        </authorList>
    </citation>
    <scope>NUCLEOTIDE SEQUENCE [LARGE SCALE GENOMIC DNA]</scope>
    <source>
        <strain>ATCC BAA-1283 / AT1b</strain>
    </source>
</reference>